<evidence type="ECO:0000255" key="1">
    <source>
        <dbReference type="HAMAP-Rule" id="MF_01333"/>
    </source>
</evidence>
<evidence type="ECO:0000305" key="2"/>
<protein>
    <recommendedName>
        <fullName evidence="1">Large ribosomal subunit protein uL5</fullName>
    </recommendedName>
    <alternativeName>
        <fullName evidence="2">50S ribosomal protein L5</fullName>
    </alternativeName>
</protein>
<reference key="1">
    <citation type="journal article" date="2007" name="Genome Biol.">
        <title>Characterization and modeling of the Haemophilus influenzae core and supragenomes based on the complete genomic sequences of Rd and 12 clinical nontypeable strains.</title>
        <authorList>
            <person name="Hogg J.S."/>
            <person name="Hu F.Z."/>
            <person name="Janto B."/>
            <person name="Boissy R."/>
            <person name="Hayes J."/>
            <person name="Keefe R."/>
            <person name="Post J.C."/>
            <person name="Ehrlich G.D."/>
        </authorList>
    </citation>
    <scope>NUCLEOTIDE SEQUENCE [LARGE SCALE GENOMIC DNA]</scope>
    <source>
        <strain>PittEE</strain>
    </source>
</reference>
<dbReference type="EMBL" id="CP000671">
    <property type="protein sequence ID" value="ABQ98936.1"/>
    <property type="molecule type" value="Genomic_DNA"/>
</dbReference>
<dbReference type="SMR" id="A5UDT5"/>
<dbReference type="KEGG" id="hip:CGSHiEE_08115"/>
<dbReference type="HOGENOM" id="CLU_061015_2_1_6"/>
<dbReference type="GO" id="GO:1990904">
    <property type="term" value="C:ribonucleoprotein complex"/>
    <property type="evidence" value="ECO:0007669"/>
    <property type="project" value="UniProtKB-KW"/>
</dbReference>
<dbReference type="GO" id="GO:0005840">
    <property type="term" value="C:ribosome"/>
    <property type="evidence" value="ECO:0007669"/>
    <property type="project" value="UniProtKB-KW"/>
</dbReference>
<dbReference type="GO" id="GO:0019843">
    <property type="term" value="F:rRNA binding"/>
    <property type="evidence" value="ECO:0007669"/>
    <property type="project" value="UniProtKB-UniRule"/>
</dbReference>
<dbReference type="GO" id="GO:0003735">
    <property type="term" value="F:structural constituent of ribosome"/>
    <property type="evidence" value="ECO:0007669"/>
    <property type="project" value="InterPro"/>
</dbReference>
<dbReference type="GO" id="GO:0000049">
    <property type="term" value="F:tRNA binding"/>
    <property type="evidence" value="ECO:0007669"/>
    <property type="project" value="UniProtKB-UniRule"/>
</dbReference>
<dbReference type="GO" id="GO:0006412">
    <property type="term" value="P:translation"/>
    <property type="evidence" value="ECO:0007669"/>
    <property type="project" value="UniProtKB-UniRule"/>
</dbReference>
<dbReference type="FunFam" id="3.30.1440.10:FF:000001">
    <property type="entry name" value="50S ribosomal protein L5"/>
    <property type="match status" value="1"/>
</dbReference>
<dbReference type="Gene3D" id="3.30.1440.10">
    <property type="match status" value="1"/>
</dbReference>
<dbReference type="HAMAP" id="MF_01333_B">
    <property type="entry name" value="Ribosomal_uL5_B"/>
    <property type="match status" value="1"/>
</dbReference>
<dbReference type="InterPro" id="IPR002132">
    <property type="entry name" value="Ribosomal_uL5"/>
</dbReference>
<dbReference type="InterPro" id="IPR020930">
    <property type="entry name" value="Ribosomal_uL5_bac-type"/>
</dbReference>
<dbReference type="InterPro" id="IPR031309">
    <property type="entry name" value="Ribosomal_uL5_C"/>
</dbReference>
<dbReference type="InterPro" id="IPR020929">
    <property type="entry name" value="Ribosomal_uL5_CS"/>
</dbReference>
<dbReference type="InterPro" id="IPR022803">
    <property type="entry name" value="Ribosomal_uL5_dom_sf"/>
</dbReference>
<dbReference type="InterPro" id="IPR031310">
    <property type="entry name" value="Ribosomal_uL5_N"/>
</dbReference>
<dbReference type="NCBIfam" id="NF000585">
    <property type="entry name" value="PRK00010.1"/>
    <property type="match status" value="1"/>
</dbReference>
<dbReference type="PANTHER" id="PTHR11994">
    <property type="entry name" value="60S RIBOSOMAL PROTEIN L11-RELATED"/>
    <property type="match status" value="1"/>
</dbReference>
<dbReference type="Pfam" id="PF00281">
    <property type="entry name" value="Ribosomal_L5"/>
    <property type="match status" value="1"/>
</dbReference>
<dbReference type="Pfam" id="PF00673">
    <property type="entry name" value="Ribosomal_L5_C"/>
    <property type="match status" value="1"/>
</dbReference>
<dbReference type="PIRSF" id="PIRSF002161">
    <property type="entry name" value="Ribosomal_L5"/>
    <property type="match status" value="1"/>
</dbReference>
<dbReference type="SUPFAM" id="SSF55282">
    <property type="entry name" value="RL5-like"/>
    <property type="match status" value="1"/>
</dbReference>
<dbReference type="PROSITE" id="PS00358">
    <property type="entry name" value="RIBOSOMAL_L5"/>
    <property type="match status" value="1"/>
</dbReference>
<feature type="chain" id="PRO_1000052743" description="Large ribosomal subunit protein uL5">
    <location>
        <begin position="1"/>
        <end position="179"/>
    </location>
</feature>
<organism>
    <name type="scientific">Haemophilus influenzae (strain PittEE)</name>
    <dbReference type="NCBI Taxonomy" id="374930"/>
    <lineage>
        <taxon>Bacteria</taxon>
        <taxon>Pseudomonadati</taxon>
        <taxon>Pseudomonadota</taxon>
        <taxon>Gammaproteobacteria</taxon>
        <taxon>Pasteurellales</taxon>
        <taxon>Pasteurellaceae</taxon>
        <taxon>Haemophilus</taxon>
    </lineage>
</organism>
<gene>
    <name evidence="1" type="primary">rplE</name>
    <name type="ordered locus">CGSHiEE_08115</name>
</gene>
<keyword id="KW-0687">Ribonucleoprotein</keyword>
<keyword id="KW-0689">Ribosomal protein</keyword>
<keyword id="KW-0694">RNA-binding</keyword>
<keyword id="KW-0699">rRNA-binding</keyword>
<keyword id="KW-0820">tRNA-binding</keyword>
<accession>A5UDT5</accession>
<comment type="function">
    <text evidence="1">This is one of the proteins that bind and probably mediate the attachment of the 5S RNA into the large ribosomal subunit, where it forms part of the central protuberance. In the 70S ribosome it contacts protein S13 of the 30S subunit (bridge B1b), connecting the 2 subunits; this bridge is implicated in subunit movement. Contacts the P site tRNA; the 5S rRNA and some of its associated proteins might help stabilize positioning of ribosome-bound tRNAs.</text>
</comment>
<comment type="subunit">
    <text evidence="1">Part of the 50S ribosomal subunit; part of the 5S rRNA/L5/L18/L25 subcomplex. Contacts the 5S rRNA and the P site tRNA. Forms a bridge to the 30S subunit in the 70S ribosome.</text>
</comment>
<comment type="similarity">
    <text evidence="1">Belongs to the universal ribosomal protein uL5 family.</text>
</comment>
<name>RL5_HAEIE</name>
<sequence>MAKLHDYYRDQVVSELKNKFGYKSVMQVPRIEKITLNMGVGEALTDKKLLDNAVADLAAISGQKPLVTKARKSVAGFKIRQGYPIGCKVTLRGERMWEFFERLITIAVPRIRDFRGLSAKSFDGRGNYSMGVREQIIFPEIDYDKVDRVRGLDITITTTAKNDEEGQALLAAFNFPFRK</sequence>
<proteinExistence type="inferred from homology"/>